<organism>
    <name type="scientific">Archaeoglobus fulgidus (strain ATCC 49558 / DSM 4304 / JCM 9628 / NBRC 100126 / VC-16)</name>
    <dbReference type="NCBI Taxonomy" id="224325"/>
    <lineage>
        <taxon>Archaea</taxon>
        <taxon>Methanobacteriati</taxon>
        <taxon>Methanobacteriota</taxon>
        <taxon>Archaeoglobi</taxon>
        <taxon>Archaeoglobales</taxon>
        <taxon>Archaeoglobaceae</taxon>
        <taxon>Archaeoglobus</taxon>
    </lineage>
</organism>
<gene>
    <name type="ordered locus">AF_2170</name>
</gene>
<dbReference type="EMBL" id="AE000782">
    <property type="protein sequence ID" value="AAB89093.1"/>
    <property type="molecule type" value="Genomic_DNA"/>
</dbReference>
<dbReference type="PIR" id="B69521">
    <property type="entry name" value="B69521"/>
</dbReference>
<dbReference type="RefSeq" id="WP_010879659.1">
    <property type="nucleotide sequence ID" value="NC_000917.1"/>
</dbReference>
<dbReference type="SMR" id="O28112"/>
<dbReference type="STRING" id="224325.AF_2170"/>
<dbReference type="PaxDb" id="224325-AF_2170"/>
<dbReference type="EnsemblBacteria" id="AAB89093">
    <property type="protein sequence ID" value="AAB89093"/>
    <property type="gene ID" value="AF_2170"/>
</dbReference>
<dbReference type="KEGG" id="afu:AF_2170"/>
<dbReference type="eggNOG" id="arCOG07536">
    <property type="taxonomic scope" value="Archaea"/>
</dbReference>
<dbReference type="HOGENOM" id="CLU_856862_0_0_2"/>
<dbReference type="OrthoDB" id="103428at2157"/>
<dbReference type="Proteomes" id="UP000002199">
    <property type="component" value="Chromosome"/>
</dbReference>
<dbReference type="Gene3D" id="2.120.10.80">
    <property type="entry name" value="Kelch-type beta propeller"/>
    <property type="match status" value="1"/>
</dbReference>
<dbReference type="InterPro" id="IPR015915">
    <property type="entry name" value="Kelch-typ_b-propeller"/>
</dbReference>
<dbReference type="InterPro" id="IPR006652">
    <property type="entry name" value="Kelch_1"/>
</dbReference>
<dbReference type="PANTHER" id="PTHR24412">
    <property type="entry name" value="KELCH PROTEIN"/>
    <property type="match status" value="1"/>
</dbReference>
<dbReference type="PANTHER" id="PTHR24412:SF441">
    <property type="entry name" value="KELCH-LIKE PROTEIN 28"/>
    <property type="match status" value="1"/>
</dbReference>
<dbReference type="Pfam" id="PF01344">
    <property type="entry name" value="Kelch_1"/>
    <property type="match status" value="1"/>
</dbReference>
<dbReference type="SUPFAM" id="SSF117281">
    <property type="entry name" value="Kelch motif"/>
    <property type="match status" value="1"/>
</dbReference>
<accession>O28112</accession>
<reference key="1">
    <citation type="journal article" date="1997" name="Nature">
        <title>The complete genome sequence of the hyperthermophilic, sulphate-reducing archaeon Archaeoglobus fulgidus.</title>
        <authorList>
            <person name="Klenk H.-P."/>
            <person name="Clayton R.A."/>
            <person name="Tomb J.-F."/>
            <person name="White O."/>
            <person name="Nelson K.E."/>
            <person name="Ketchum K.A."/>
            <person name="Dodson R.J."/>
            <person name="Gwinn M.L."/>
            <person name="Hickey E.K."/>
            <person name="Peterson J.D."/>
            <person name="Richardson D.L."/>
            <person name="Kerlavage A.R."/>
            <person name="Graham D.E."/>
            <person name="Kyrpides N.C."/>
            <person name="Fleischmann R.D."/>
            <person name="Quackenbush J."/>
            <person name="Lee N.H."/>
            <person name="Sutton G.G."/>
            <person name="Gill S.R."/>
            <person name="Kirkness E.F."/>
            <person name="Dougherty B.A."/>
            <person name="McKenney K."/>
            <person name="Adams M.D."/>
            <person name="Loftus B.J."/>
            <person name="Peterson S.N."/>
            <person name="Reich C.I."/>
            <person name="McNeil L.K."/>
            <person name="Badger J.H."/>
            <person name="Glodek A."/>
            <person name="Zhou L."/>
            <person name="Overbeek R."/>
            <person name="Gocayne J.D."/>
            <person name="Weidman J.F."/>
            <person name="McDonald L.A."/>
            <person name="Utterback T.R."/>
            <person name="Cotton M.D."/>
            <person name="Spriggs T."/>
            <person name="Artiach P."/>
            <person name="Kaine B.P."/>
            <person name="Sykes S.M."/>
            <person name="Sadow P.W."/>
            <person name="D'Andrea K.P."/>
            <person name="Bowman C."/>
            <person name="Fujii C."/>
            <person name="Garland S.A."/>
            <person name="Mason T.M."/>
            <person name="Olsen G.J."/>
            <person name="Fraser C.M."/>
            <person name="Smith H.O."/>
            <person name="Woese C.R."/>
            <person name="Venter J.C."/>
        </authorList>
    </citation>
    <scope>NUCLEOTIDE SEQUENCE [LARGE SCALE GENOMIC DNA]</scope>
    <source>
        <strain>ATCC 49558 / DSM 4304 / JCM 9628 / NBRC 100126 / VC-16</strain>
    </source>
</reference>
<proteinExistence type="predicted"/>
<name>Y2170_ARCFU</name>
<feature type="chain" id="PRO_0000119172" description="Kelch domain-containing protein AF_2170">
    <location>
        <begin position="1"/>
        <end position="324"/>
    </location>
</feature>
<feature type="repeat" description="Kelch 1">
    <location>
        <begin position="229"/>
        <end position="276"/>
    </location>
</feature>
<feature type="repeat" description="Kelch 2">
    <location>
        <begin position="277"/>
        <end position="323"/>
    </location>
</feature>
<protein>
    <recommendedName>
        <fullName>Kelch domain-containing protein AF_2170</fullName>
    </recommendedName>
</protein>
<keyword id="KW-0880">Kelch repeat</keyword>
<keyword id="KW-1185">Reference proteome</keyword>
<keyword id="KW-0677">Repeat</keyword>
<sequence>MKPQPLLLIAIALLCCCVTDEGDKITSLGKIADESIVYVWWSVKAEDRVYLGLGTVDGTSFAEFHPPNRLEILLSSEDFSQREAAVWDGEEILIFGGTVFENGKYSPTDQILSFNPKLERLRVLNASLPHPTSDVAAVWGDSRVYIFLNNSERCEVYAFYPSNESFAKLDVSCPIEHPGGCVHSVVWYGGKAYFFCGEGVASFDPMGGFKWIAFTDRVWVRAATVADGYIFAIGGSSGIAETKDEIIRFNPKTGELCEMRTKLPVARGQAVAVGGEYIYIFGGYTKDGYANEILRYDYRGDKCVNFIQLLNDDVKKYRPNNGKQ</sequence>